<proteinExistence type="evidence at protein level"/>
<feature type="signal peptide" evidence="5">
    <location>
        <begin position="1"/>
        <end position="22"/>
    </location>
</feature>
<feature type="chain" id="PRO_0000003520" description="Complement C1q subcomponent subunit A">
    <location>
        <begin position="23"/>
        <end position="245"/>
    </location>
</feature>
<feature type="domain" description="Collagen-like">
    <location>
        <begin position="31"/>
        <end position="109"/>
    </location>
</feature>
<feature type="domain" description="C1q" evidence="3">
    <location>
        <begin position="110"/>
        <end position="245"/>
    </location>
</feature>
<feature type="region of interest" description="Disordered" evidence="4">
    <location>
        <begin position="35"/>
        <end position="111"/>
    </location>
</feature>
<feature type="binding site" evidence="1">
    <location>
        <position position="199"/>
    </location>
    <ligand>
        <name>Ca(2+)</name>
        <dbReference type="ChEBI" id="CHEBI:29108"/>
    </ligand>
</feature>
<feature type="modified residue" description="4-hydroxyproline" evidence="1">
    <location>
        <position position="39"/>
    </location>
</feature>
<feature type="modified residue" description="4-hydroxyproline" evidence="1">
    <location>
        <position position="45"/>
    </location>
</feature>
<feature type="modified residue" description="5-hydroxylysine" evidence="1">
    <location>
        <position position="48"/>
    </location>
</feature>
<feature type="modified residue" description="4-hydroxyproline" evidence="1">
    <location>
        <position position="54"/>
    </location>
</feature>
<feature type="modified residue" description="5-hydroxylysine" evidence="1">
    <location>
        <position position="67"/>
    </location>
</feature>
<feature type="modified residue" description="4-hydroxyproline" evidence="1">
    <location>
        <position position="79"/>
    </location>
</feature>
<feature type="modified residue" description="4-hydroxyproline" evidence="1">
    <location>
        <position position="85"/>
    </location>
</feature>
<feature type="modified residue" description="5-hydroxylysine" evidence="1">
    <location>
        <position position="100"/>
    </location>
</feature>
<feature type="glycosylation site" description="O-linked (Gal...) hydroxylysine" evidence="1">
    <location>
        <position position="48"/>
    </location>
</feature>
<feature type="glycosylation site" description="O-linked (Gal...) hydroxylysine" evidence="1">
    <location>
        <position position="67"/>
    </location>
</feature>
<feature type="glycosylation site" description="O-linked (Gal...) hydroxylysine" evidence="1">
    <location>
        <position position="100"/>
    </location>
</feature>
<feature type="glycosylation site" description="N-linked (GlcNAc...) asparagine" evidence="2">
    <location>
        <position position="146"/>
    </location>
</feature>
<feature type="disulfide bond" description="Interchain (with C-29 in B chain)">
    <location>
        <position position="26"/>
    </location>
</feature>
<feature type="disulfide bond" evidence="1">
    <location>
        <begin position="172"/>
        <end position="190"/>
    </location>
</feature>
<keyword id="KW-0106">Calcium</keyword>
<keyword id="KW-0176">Collagen</keyword>
<keyword id="KW-0180">Complement pathway</keyword>
<keyword id="KW-0903">Direct protein sequencing</keyword>
<keyword id="KW-1015">Disulfide bond</keyword>
<keyword id="KW-0325">Glycoprotein</keyword>
<keyword id="KW-0379">Hydroxylation</keyword>
<keyword id="KW-0391">Immunity</keyword>
<keyword id="KW-0399">Innate immunity</keyword>
<keyword id="KW-0479">Metal-binding</keyword>
<keyword id="KW-1185">Reference proteome</keyword>
<keyword id="KW-0677">Repeat</keyword>
<keyword id="KW-0964">Secreted</keyword>
<keyword id="KW-0732">Signal</keyword>
<organism>
    <name type="scientific">Rattus norvegicus</name>
    <name type="common">Rat</name>
    <dbReference type="NCBI Taxonomy" id="10116"/>
    <lineage>
        <taxon>Eukaryota</taxon>
        <taxon>Metazoa</taxon>
        <taxon>Chordata</taxon>
        <taxon>Craniata</taxon>
        <taxon>Vertebrata</taxon>
        <taxon>Euteleostomi</taxon>
        <taxon>Mammalia</taxon>
        <taxon>Eutheria</taxon>
        <taxon>Euarchontoglires</taxon>
        <taxon>Glires</taxon>
        <taxon>Rodentia</taxon>
        <taxon>Myomorpha</taxon>
        <taxon>Muroidea</taxon>
        <taxon>Muridae</taxon>
        <taxon>Murinae</taxon>
        <taxon>Rattus</taxon>
    </lineage>
</organism>
<evidence type="ECO:0000250" key="1">
    <source>
        <dbReference type="UniProtKB" id="P02745"/>
    </source>
</evidence>
<evidence type="ECO:0000255" key="2"/>
<evidence type="ECO:0000255" key="3">
    <source>
        <dbReference type="PROSITE-ProRule" id="PRU00368"/>
    </source>
</evidence>
<evidence type="ECO:0000256" key="4">
    <source>
        <dbReference type="SAM" id="MobiDB-lite"/>
    </source>
</evidence>
<evidence type="ECO:0000269" key="5">
    <source>
    </source>
</evidence>
<evidence type="ECO:0000303" key="6">
    <source>
    </source>
</evidence>
<evidence type="ECO:0000312" key="7">
    <source>
        <dbReference type="RGD" id="1306716"/>
    </source>
</evidence>
<dbReference type="EMBL" id="BC086605">
    <property type="protein sequence ID" value="AAH86605.1"/>
    <property type="molecule type" value="mRNA"/>
</dbReference>
<dbReference type="RefSeq" id="NP_001008515.1">
    <property type="nucleotide sequence ID" value="NM_001008515.1"/>
</dbReference>
<dbReference type="SMR" id="P31720"/>
<dbReference type="BioGRID" id="255938">
    <property type="interactions" value="1"/>
</dbReference>
<dbReference type="FunCoup" id="P31720">
    <property type="interactions" value="51"/>
</dbReference>
<dbReference type="IntAct" id="P31720">
    <property type="interactions" value="1"/>
</dbReference>
<dbReference type="MINT" id="P31720"/>
<dbReference type="STRING" id="10116.ENSRNOP00000017385"/>
<dbReference type="GlyCosmos" id="P31720">
    <property type="glycosylation" value="4 sites, No reported glycans"/>
</dbReference>
<dbReference type="GlyGen" id="P31720">
    <property type="glycosylation" value="5 sites"/>
</dbReference>
<dbReference type="PhosphoSitePlus" id="P31720"/>
<dbReference type="PaxDb" id="10116-ENSRNOP00000017385"/>
<dbReference type="Ensembl" id="ENSRNOT00000017385.7">
    <property type="protein sequence ID" value="ENSRNOP00000017385.3"/>
    <property type="gene ID" value="ENSRNOG00000012807.7"/>
</dbReference>
<dbReference type="GeneID" id="298566"/>
<dbReference type="KEGG" id="rno:298566"/>
<dbReference type="AGR" id="RGD:1306716"/>
<dbReference type="CTD" id="712"/>
<dbReference type="RGD" id="1306716">
    <property type="gene designation" value="C1qa"/>
</dbReference>
<dbReference type="eggNOG" id="ENOG502RZM2">
    <property type="taxonomic scope" value="Eukaryota"/>
</dbReference>
<dbReference type="GeneTree" id="ENSGT00940000162143"/>
<dbReference type="HOGENOM" id="CLU_001074_0_2_1"/>
<dbReference type="InParanoid" id="P31720"/>
<dbReference type="OrthoDB" id="86140at9989"/>
<dbReference type="PhylomeDB" id="P31720"/>
<dbReference type="TreeFam" id="TF329591"/>
<dbReference type="Reactome" id="R-RNO-166663">
    <property type="pathway name" value="Initial triggering of complement"/>
</dbReference>
<dbReference type="Reactome" id="R-RNO-173623">
    <property type="pathway name" value="Classical antibody-mediated complement activation"/>
</dbReference>
<dbReference type="Reactome" id="R-RNO-977606">
    <property type="pathway name" value="Regulation of Complement cascade"/>
</dbReference>
<dbReference type="PRO" id="PR:P31720"/>
<dbReference type="Proteomes" id="UP000002494">
    <property type="component" value="Chromosome 5"/>
</dbReference>
<dbReference type="Bgee" id="ENSRNOG00000012807">
    <property type="expression patterns" value="Expressed in spleen and 20 other cell types or tissues"/>
</dbReference>
<dbReference type="GO" id="GO:0005581">
    <property type="term" value="C:collagen trimer"/>
    <property type="evidence" value="ECO:0007669"/>
    <property type="project" value="UniProtKB-KW"/>
</dbReference>
<dbReference type="GO" id="GO:0062167">
    <property type="term" value="C:complement component C1q complex"/>
    <property type="evidence" value="ECO:0000266"/>
    <property type="project" value="RGD"/>
</dbReference>
<dbReference type="GO" id="GO:0005576">
    <property type="term" value="C:extracellular region"/>
    <property type="evidence" value="ECO:0000266"/>
    <property type="project" value="RGD"/>
</dbReference>
<dbReference type="GO" id="GO:0098890">
    <property type="term" value="C:extrinsic component of postsynaptic membrane"/>
    <property type="evidence" value="ECO:0000266"/>
    <property type="project" value="RGD"/>
</dbReference>
<dbReference type="GO" id="GO:0098888">
    <property type="term" value="C:extrinsic component of presynaptic membrane"/>
    <property type="evidence" value="ECO:0000266"/>
    <property type="project" value="RGD"/>
</dbReference>
<dbReference type="GO" id="GO:0098978">
    <property type="term" value="C:glutamatergic synapse"/>
    <property type="evidence" value="ECO:0000266"/>
    <property type="project" value="RGD"/>
</dbReference>
<dbReference type="GO" id="GO:0098794">
    <property type="term" value="C:postsynapse"/>
    <property type="evidence" value="ECO:0000266"/>
    <property type="project" value="RGD"/>
</dbReference>
<dbReference type="GO" id="GO:0045202">
    <property type="term" value="C:synapse"/>
    <property type="evidence" value="ECO:0000314"/>
    <property type="project" value="ARUK-UCL"/>
</dbReference>
<dbReference type="GO" id="GO:0048143">
    <property type="term" value="P:astrocyte activation"/>
    <property type="evidence" value="ECO:0000266"/>
    <property type="project" value="RGD"/>
</dbReference>
<dbReference type="GO" id="GO:0006958">
    <property type="term" value="P:complement activation, classical pathway"/>
    <property type="evidence" value="ECO:0000266"/>
    <property type="project" value="RGD"/>
</dbReference>
<dbReference type="GO" id="GO:0150062">
    <property type="term" value="P:complement-mediated synapse pruning"/>
    <property type="evidence" value="ECO:0000266"/>
    <property type="project" value="RGD"/>
</dbReference>
<dbReference type="GO" id="GO:0045087">
    <property type="term" value="P:innate immune response"/>
    <property type="evidence" value="ECO:0007669"/>
    <property type="project" value="UniProtKB-KW"/>
</dbReference>
<dbReference type="GO" id="GO:0001774">
    <property type="term" value="P:microglial cell activation"/>
    <property type="evidence" value="ECO:0000266"/>
    <property type="project" value="RGD"/>
</dbReference>
<dbReference type="GO" id="GO:0016322">
    <property type="term" value="P:neuron remodeling"/>
    <property type="evidence" value="ECO:0000266"/>
    <property type="project" value="RGD"/>
</dbReference>
<dbReference type="GO" id="GO:0010039">
    <property type="term" value="P:response to iron ion"/>
    <property type="evidence" value="ECO:0000270"/>
    <property type="project" value="RGD"/>
</dbReference>
<dbReference type="GO" id="GO:0050808">
    <property type="term" value="P:synapse organization"/>
    <property type="evidence" value="ECO:0000266"/>
    <property type="project" value="RGD"/>
</dbReference>
<dbReference type="GO" id="GO:0098883">
    <property type="term" value="P:synapse pruning"/>
    <property type="evidence" value="ECO:0000266"/>
    <property type="project" value="RGD"/>
</dbReference>
<dbReference type="GO" id="GO:0150064">
    <property type="term" value="P:vertebrate eye-specific patterning"/>
    <property type="evidence" value="ECO:0000266"/>
    <property type="project" value="RGD"/>
</dbReference>
<dbReference type="FunFam" id="2.60.120.40:FF:000001">
    <property type="entry name" value="Complement C1q B chain"/>
    <property type="match status" value="1"/>
</dbReference>
<dbReference type="Gene3D" id="2.60.120.40">
    <property type="match status" value="1"/>
</dbReference>
<dbReference type="InterPro" id="IPR001073">
    <property type="entry name" value="C1q_dom"/>
</dbReference>
<dbReference type="InterPro" id="IPR008160">
    <property type="entry name" value="Collagen"/>
</dbReference>
<dbReference type="InterPro" id="IPR050392">
    <property type="entry name" value="Collagen/C1q_domain"/>
</dbReference>
<dbReference type="InterPro" id="IPR008983">
    <property type="entry name" value="Tumour_necrosis_fac-like_dom"/>
</dbReference>
<dbReference type="PANTHER" id="PTHR15427:SF26">
    <property type="entry name" value="COMPLEMENT C1Q SUBCOMPONENT SUBUNIT A"/>
    <property type="match status" value="1"/>
</dbReference>
<dbReference type="PANTHER" id="PTHR15427">
    <property type="entry name" value="EMILIN ELASTIN MICROFIBRIL INTERFACE-LOCATED PROTEIN ELASTIN MICROFIBRIL INTERFACER"/>
    <property type="match status" value="1"/>
</dbReference>
<dbReference type="Pfam" id="PF00386">
    <property type="entry name" value="C1q"/>
    <property type="match status" value="1"/>
</dbReference>
<dbReference type="Pfam" id="PF01391">
    <property type="entry name" value="Collagen"/>
    <property type="match status" value="1"/>
</dbReference>
<dbReference type="PRINTS" id="PR00007">
    <property type="entry name" value="COMPLEMNTC1Q"/>
</dbReference>
<dbReference type="SMART" id="SM00110">
    <property type="entry name" value="C1Q"/>
    <property type="match status" value="1"/>
</dbReference>
<dbReference type="SUPFAM" id="SSF49842">
    <property type="entry name" value="TNF-like"/>
    <property type="match status" value="1"/>
</dbReference>
<dbReference type="PROSITE" id="PS50871">
    <property type="entry name" value="C1Q"/>
    <property type="match status" value="1"/>
</dbReference>
<name>C1QA_RAT</name>
<gene>
    <name evidence="6 7" type="primary">C1qa</name>
</gene>
<sequence length="245" mass="25917">METSQGWLVACVLAVTLVWTVAEDVCRAPNGKDGVAGIPGRPGRPGLKGERGEPGAAGIRTGIRGLKGDMGESGPPGKPGNVGFPGPTGPLGNSGPQGLKGVKGNPGNIRDQPRPAFSAIRQNPPTYGNVVVFDKVLTNQENPYQNRTGHFICAVPGFYYFTFQVISKWDLCLSIVSSSRGQPRNSLGFCDTNSKGLFQVLAGGTVLQLQRGDEVWIEKDPAKGRIYQGTEADSIFSGFLIFPSA</sequence>
<reference key="1">
    <citation type="journal article" date="2004" name="Genome Res.">
        <title>The status, quality, and expansion of the NIH full-length cDNA project: the Mammalian Gene Collection (MGC).</title>
        <authorList>
            <consortium name="The MGC Project Team"/>
        </authorList>
    </citation>
    <scope>NUCLEOTIDE SEQUENCE [LARGE SCALE MRNA]</scope>
    <source>
        <tissue>Brain</tissue>
    </source>
</reference>
<reference key="2">
    <citation type="journal article" date="1993" name="Mol. Immunol.">
        <title>Rapid isolation and biochemical characterization of rat C1 and C1q.</title>
        <authorList>
            <person name="Wing M.G."/>
            <person name="Seilly D.J."/>
            <person name="Bridgman D.J."/>
            <person name="Harrison R.A."/>
        </authorList>
    </citation>
    <scope>PROTEIN SEQUENCE OF 23-37</scope>
    <scope>SUBCELLULAR LOCATION</scope>
</reference>
<accession>P31720</accession>
<accession>Q5RJK1</accession>
<protein>
    <recommendedName>
        <fullName>Complement C1q subcomponent subunit A</fullName>
    </recommendedName>
</protein>
<comment type="function">
    <text evidence="1">Core component of the complement C1 complex, a multiprotein complex that initiates the classical pathway of the complement system, a cascade of proteins that leads to phagocytosis and breakdown of pathogens and signaling that strengthens the adaptive immune system. The classical complement pathway is initiated by the C1Q subcomplex of the C1 complex, which specifically binds IgG or IgM immunoglobulins complexed with antigens, forming antigen-antibody complexes on the surface of pathogens: C1QA, together with C1QB and C1QC, specifically recognizes and binds the Fc regions of IgG or IgM via its C1q domain. Immunoglobulin-binding activates the proenzyme C1R, which cleaves C1S, initiating the proteolytic cascade of the complement system. The C1Q subcomplex is activated by a hexamer of IgG complexed with antigens, while it is activated by a pentameric IgM. The C1Q subcomplex also recognizes and binds phosphatidylserine exposed on the surface of cells undergoing programmed cell death, possibly promoting activation of the complement system.</text>
</comment>
<comment type="activity regulation">
    <text evidence="1">The C1Q subcomplex is inhibited by sulfated molecules, such as triterpenoid sulfates, heparan sulfate, or chondroitin sulfates.</text>
</comment>
<comment type="subunit">
    <text evidence="1">Core component of the complement C1 complex, a calcium-dependent complex composed of 1 molecule of the C1Q subcomplex, 2 molecules of C1R and 2 molecules of C1S. The C1Q subcomplex is composed 18 subunits: 3 chains of C1QA, C1QB, and C1QC trimerize to form 6 collagen-like triple helices connected to six globular ligand-recognition modules (C1q domain). Interacts with CR1 (via Sushi 24 and Sushi 25 domains). Interacts (via C-terminus) with CD33; this interaction activates CD33 inhibitory motifs.</text>
</comment>
<comment type="subcellular location">
    <subcellularLocation>
        <location evidence="5">Secreted</location>
    </subcellularLocation>
    <subcellularLocation>
        <location evidence="1">Cell surface</location>
    </subcellularLocation>
    <text evidence="1">Specifically binds IgG or IgM immunoglobulins complexed with antigens, forming antigen-antibody complexes on the surface of pathogens.</text>
</comment>
<comment type="domain">
    <text evidence="1">The C1q domain is the ligand-recognition domain, which specifically recognizes and binds the Fc regions of IgG or IgM immunoglobulins.</text>
</comment>
<comment type="domain">
    <text evidence="1">The collagen-like domain interacts with C1R and C1S proenzymes.</text>
</comment>
<comment type="PTM">
    <text evidence="1">O-linked glycans are assumed to be the Glc-Gal disaccharides typically found as secondary modifications of hydroxylated lysines in collagen-like domains.</text>
</comment>